<accession>Q9JHG1</accession>
<organism>
    <name type="scientific">Mus musculus</name>
    <name type="common">Mouse</name>
    <dbReference type="NCBI Taxonomy" id="10090"/>
    <lineage>
        <taxon>Eukaryota</taxon>
        <taxon>Metazoa</taxon>
        <taxon>Chordata</taxon>
        <taxon>Craniata</taxon>
        <taxon>Vertebrata</taxon>
        <taxon>Euteleostomi</taxon>
        <taxon>Mammalia</taxon>
        <taxon>Eutheria</taxon>
        <taxon>Euarchontoglires</taxon>
        <taxon>Glires</taxon>
        <taxon>Rodentia</taxon>
        <taxon>Myomorpha</taxon>
        <taxon>Muroidea</taxon>
        <taxon>Muridae</taxon>
        <taxon>Murinae</taxon>
        <taxon>Mus</taxon>
        <taxon>Mus</taxon>
    </lineage>
</organism>
<comment type="function">
    <text evidence="1">Part of the glycosylphosphatidylinositol-N-acetylglucosaminyltransferase (GPI-GnT) complex that catalyzes the transfer of N-acetylglucosamine from UDP-N-acetylglucosamine to phosphatidylinositol and participates in the first step of GPI biosynthesis.</text>
</comment>
<comment type="pathway">
    <text evidence="1">Glycolipid biosynthesis; glycosylphosphatidylinositol-anchor biosynthesis.</text>
</comment>
<comment type="subunit">
    <text evidence="1">Component of the glycosylphosphatidylinositol-N-acetylglucosaminyltransferase (GPI-GnT) complex composed at least by PIGA, PIGC, PIGH, PIGP, PIGQ, PIGY and DPM2. Interacts directly with PIGA and PIGQ.</text>
</comment>
<comment type="subcellular location">
    <subcellularLocation>
        <location evidence="4">Membrane</location>
        <topology evidence="4">Multi-pass membrane protein</topology>
    </subcellularLocation>
</comment>
<comment type="tissue specificity">
    <text evidence="3">Expressed in tongue.</text>
</comment>
<comment type="similarity">
    <text evidence="4">Belongs to the PIGP family.</text>
</comment>
<comment type="online information" name="Functional Glycomics Gateway - GTase">
    <link uri="http://www.functionalglycomics.org/glycomics/molecule/jsp/glycoEnzyme/viewGlycoEnzyme.jsp?gbpId=gt_mou_593"/>
    <text>PIG-P_DCRC-1</text>
</comment>
<reference key="1">
    <citation type="journal article" date="2001" name="Mamm. Genome">
        <title>Molecular cloning and characterization of a gene expressed in mouse developing tongue, mDscr5 gene, a homolog of human DSCR5 (Down syndrome critical region gene 5).</title>
        <authorList>
            <person name="Choi D.K."/>
            <person name="Suzuki Y."/>
            <person name="Yoshimura S."/>
            <person name="Togashi T."/>
            <person name="Hida M."/>
            <person name="Taylor T.D."/>
            <person name="Wang Y."/>
            <person name="Sugano S."/>
            <person name="Hattori M."/>
            <person name="Sakaki Y."/>
        </authorList>
    </citation>
    <scope>NUCLEOTIDE SEQUENCE [MRNA]</scope>
    <scope>TISSUE SPECIFICITY</scope>
</reference>
<reference key="2">
    <citation type="journal article" date="2005" name="Science">
        <title>The transcriptional landscape of the mammalian genome.</title>
        <authorList>
            <person name="Carninci P."/>
            <person name="Kasukawa T."/>
            <person name="Katayama S."/>
            <person name="Gough J."/>
            <person name="Frith M.C."/>
            <person name="Maeda N."/>
            <person name="Oyama R."/>
            <person name="Ravasi T."/>
            <person name="Lenhard B."/>
            <person name="Wells C."/>
            <person name="Kodzius R."/>
            <person name="Shimokawa K."/>
            <person name="Bajic V.B."/>
            <person name="Brenner S.E."/>
            <person name="Batalov S."/>
            <person name="Forrest A.R."/>
            <person name="Zavolan M."/>
            <person name="Davis M.J."/>
            <person name="Wilming L.G."/>
            <person name="Aidinis V."/>
            <person name="Allen J.E."/>
            <person name="Ambesi-Impiombato A."/>
            <person name="Apweiler R."/>
            <person name="Aturaliya R.N."/>
            <person name="Bailey T.L."/>
            <person name="Bansal M."/>
            <person name="Baxter L."/>
            <person name="Beisel K.W."/>
            <person name="Bersano T."/>
            <person name="Bono H."/>
            <person name="Chalk A.M."/>
            <person name="Chiu K.P."/>
            <person name="Choudhary V."/>
            <person name="Christoffels A."/>
            <person name="Clutterbuck D.R."/>
            <person name="Crowe M.L."/>
            <person name="Dalla E."/>
            <person name="Dalrymple B.P."/>
            <person name="de Bono B."/>
            <person name="Della Gatta G."/>
            <person name="di Bernardo D."/>
            <person name="Down T."/>
            <person name="Engstrom P."/>
            <person name="Fagiolini M."/>
            <person name="Faulkner G."/>
            <person name="Fletcher C.F."/>
            <person name="Fukushima T."/>
            <person name="Furuno M."/>
            <person name="Futaki S."/>
            <person name="Gariboldi M."/>
            <person name="Georgii-Hemming P."/>
            <person name="Gingeras T.R."/>
            <person name="Gojobori T."/>
            <person name="Green R.E."/>
            <person name="Gustincich S."/>
            <person name="Harbers M."/>
            <person name="Hayashi Y."/>
            <person name="Hensch T.K."/>
            <person name="Hirokawa N."/>
            <person name="Hill D."/>
            <person name="Huminiecki L."/>
            <person name="Iacono M."/>
            <person name="Ikeo K."/>
            <person name="Iwama A."/>
            <person name="Ishikawa T."/>
            <person name="Jakt M."/>
            <person name="Kanapin A."/>
            <person name="Katoh M."/>
            <person name="Kawasawa Y."/>
            <person name="Kelso J."/>
            <person name="Kitamura H."/>
            <person name="Kitano H."/>
            <person name="Kollias G."/>
            <person name="Krishnan S.P."/>
            <person name="Kruger A."/>
            <person name="Kummerfeld S.K."/>
            <person name="Kurochkin I.V."/>
            <person name="Lareau L.F."/>
            <person name="Lazarevic D."/>
            <person name="Lipovich L."/>
            <person name="Liu J."/>
            <person name="Liuni S."/>
            <person name="McWilliam S."/>
            <person name="Madan Babu M."/>
            <person name="Madera M."/>
            <person name="Marchionni L."/>
            <person name="Matsuda H."/>
            <person name="Matsuzawa S."/>
            <person name="Miki H."/>
            <person name="Mignone F."/>
            <person name="Miyake S."/>
            <person name="Morris K."/>
            <person name="Mottagui-Tabar S."/>
            <person name="Mulder N."/>
            <person name="Nakano N."/>
            <person name="Nakauchi H."/>
            <person name="Ng P."/>
            <person name="Nilsson R."/>
            <person name="Nishiguchi S."/>
            <person name="Nishikawa S."/>
            <person name="Nori F."/>
            <person name="Ohara O."/>
            <person name="Okazaki Y."/>
            <person name="Orlando V."/>
            <person name="Pang K.C."/>
            <person name="Pavan W.J."/>
            <person name="Pavesi G."/>
            <person name="Pesole G."/>
            <person name="Petrovsky N."/>
            <person name="Piazza S."/>
            <person name="Reed J."/>
            <person name="Reid J.F."/>
            <person name="Ring B.Z."/>
            <person name="Ringwald M."/>
            <person name="Rost B."/>
            <person name="Ruan Y."/>
            <person name="Salzberg S.L."/>
            <person name="Sandelin A."/>
            <person name="Schneider C."/>
            <person name="Schoenbach C."/>
            <person name="Sekiguchi K."/>
            <person name="Semple C.A."/>
            <person name="Seno S."/>
            <person name="Sessa L."/>
            <person name="Sheng Y."/>
            <person name="Shibata Y."/>
            <person name="Shimada H."/>
            <person name="Shimada K."/>
            <person name="Silva D."/>
            <person name="Sinclair B."/>
            <person name="Sperling S."/>
            <person name="Stupka E."/>
            <person name="Sugiura K."/>
            <person name="Sultana R."/>
            <person name="Takenaka Y."/>
            <person name="Taki K."/>
            <person name="Tammoja K."/>
            <person name="Tan S.L."/>
            <person name="Tang S."/>
            <person name="Taylor M.S."/>
            <person name="Tegner J."/>
            <person name="Teichmann S.A."/>
            <person name="Ueda H.R."/>
            <person name="van Nimwegen E."/>
            <person name="Verardo R."/>
            <person name="Wei C.L."/>
            <person name="Yagi K."/>
            <person name="Yamanishi H."/>
            <person name="Zabarovsky E."/>
            <person name="Zhu S."/>
            <person name="Zimmer A."/>
            <person name="Hide W."/>
            <person name="Bult C."/>
            <person name="Grimmond S.M."/>
            <person name="Teasdale R.D."/>
            <person name="Liu E.T."/>
            <person name="Brusic V."/>
            <person name="Quackenbush J."/>
            <person name="Wahlestedt C."/>
            <person name="Mattick J.S."/>
            <person name="Hume D.A."/>
            <person name="Kai C."/>
            <person name="Sasaki D."/>
            <person name="Tomaru Y."/>
            <person name="Fukuda S."/>
            <person name="Kanamori-Katayama M."/>
            <person name="Suzuki M."/>
            <person name="Aoki J."/>
            <person name="Arakawa T."/>
            <person name="Iida J."/>
            <person name="Imamura K."/>
            <person name="Itoh M."/>
            <person name="Kato T."/>
            <person name="Kawaji H."/>
            <person name="Kawagashira N."/>
            <person name="Kawashima T."/>
            <person name="Kojima M."/>
            <person name="Kondo S."/>
            <person name="Konno H."/>
            <person name="Nakano K."/>
            <person name="Ninomiya N."/>
            <person name="Nishio T."/>
            <person name="Okada M."/>
            <person name="Plessy C."/>
            <person name="Shibata K."/>
            <person name="Shiraki T."/>
            <person name="Suzuki S."/>
            <person name="Tagami M."/>
            <person name="Waki K."/>
            <person name="Watahiki A."/>
            <person name="Okamura-Oho Y."/>
            <person name="Suzuki H."/>
            <person name="Kawai J."/>
            <person name="Hayashizaki Y."/>
        </authorList>
    </citation>
    <scope>NUCLEOTIDE SEQUENCE [LARGE SCALE MRNA]</scope>
    <source>
        <strain>C57BL/6J</strain>
    </source>
</reference>
<reference key="3">
    <citation type="journal article" date="2004" name="Genome Res.">
        <title>The status, quality, and expansion of the NIH full-length cDNA project: the Mammalian Gene Collection (MGC).</title>
        <authorList>
            <consortium name="The MGC Project Team"/>
        </authorList>
    </citation>
    <scope>NUCLEOTIDE SEQUENCE [LARGE SCALE MRNA]</scope>
    <source>
        <strain>C57BL/6J</strain>
        <strain>FVB/N</strain>
        <tissue>Brain</tissue>
        <tissue>Salivary gland</tissue>
        <tissue>Thymus</tissue>
    </source>
</reference>
<protein>
    <recommendedName>
        <fullName evidence="4">Phosphatidylinositol N-acetylglucosaminyltransferase subunit P</fullName>
    </recommendedName>
    <alternativeName>
        <fullName>Down syndrome critical region protein 5 homolog</fullName>
    </alternativeName>
    <alternativeName>
        <fullName>Phosphatidylinositol-glycan biosynthesis class P protein</fullName>
        <shortName>PIG-P</shortName>
    </alternativeName>
</protein>
<evidence type="ECO:0000250" key="1">
    <source>
        <dbReference type="UniProtKB" id="P57054"/>
    </source>
</evidence>
<evidence type="ECO:0000255" key="2"/>
<evidence type="ECO:0000269" key="3">
    <source>
    </source>
</evidence>
<evidence type="ECO:0000305" key="4"/>
<evidence type="ECO:0000312" key="5">
    <source>
        <dbReference type="MGI" id="MGI:1860433"/>
    </source>
</evidence>
<gene>
    <name evidence="5" type="primary">Pigp</name>
    <name type="synonym">Dcrc</name>
    <name type="synonym">Dscr5</name>
</gene>
<proteinExistence type="evidence at transcript level"/>
<sequence>MVENSPSPLPERAIYGFVLFLSSQFGFILYLVWAFVPESWLNSLGLTYWPQKYWAVALPVYLLITVVIGYVLLFGINMMSTSPLDSIHTITDNYAKNQQRKNYQEDAIPALRDVPISEVNKMFFLGAKELNT</sequence>
<keyword id="KW-0337">GPI-anchor biosynthesis</keyword>
<keyword id="KW-0472">Membrane</keyword>
<keyword id="KW-1185">Reference proteome</keyword>
<keyword id="KW-0812">Transmembrane</keyword>
<keyword id="KW-1133">Transmembrane helix</keyword>
<name>PIGP_MOUSE</name>
<dbReference type="EMBL" id="AF216306">
    <property type="protein sequence ID" value="AAF32294.1"/>
    <property type="molecule type" value="mRNA"/>
</dbReference>
<dbReference type="EMBL" id="AF216307">
    <property type="protein sequence ID" value="AAF32295.1"/>
    <property type="molecule type" value="mRNA"/>
</dbReference>
<dbReference type="EMBL" id="AF216308">
    <property type="protein sequence ID" value="AAF32296.1"/>
    <property type="molecule type" value="mRNA"/>
</dbReference>
<dbReference type="EMBL" id="AF216309">
    <property type="protein sequence ID" value="AAF32297.1"/>
    <property type="molecule type" value="mRNA"/>
</dbReference>
<dbReference type="EMBL" id="AK004169">
    <property type="protein sequence ID" value="BAB23204.1"/>
    <property type="molecule type" value="mRNA"/>
</dbReference>
<dbReference type="EMBL" id="BC038252">
    <property type="protein sequence ID" value="AAH38252.1"/>
    <property type="molecule type" value="mRNA"/>
</dbReference>
<dbReference type="EMBL" id="BC061116">
    <property type="protein sequence ID" value="AAH61116.1"/>
    <property type="molecule type" value="mRNA"/>
</dbReference>
<dbReference type="EMBL" id="BC096569">
    <property type="protein sequence ID" value="AAH96569.1"/>
    <property type="molecule type" value="mRNA"/>
</dbReference>
<dbReference type="CCDS" id="CCDS28348.1"/>
<dbReference type="RefSeq" id="NP_001153088.1">
    <property type="nucleotide sequence ID" value="NM_001159616.1"/>
</dbReference>
<dbReference type="RefSeq" id="NP_001153089.1">
    <property type="nucleotide sequence ID" value="NM_001159617.1"/>
</dbReference>
<dbReference type="RefSeq" id="NP_001153090.1">
    <property type="nucleotide sequence ID" value="NM_001159618.1"/>
</dbReference>
<dbReference type="RefSeq" id="NP_001153091.1">
    <property type="nucleotide sequence ID" value="NM_001159619.1"/>
</dbReference>
<dbReference type="RefSeq" id="NP_062416.1">
    <property type="nucleotide sequence ID" value="NM_019543.3"/>
</dbReference>
<dbReference type="FunCoup" id="Q9JHG1">
    <property type="interactions" value="505"/>
</dbReference>
<dbReference type="STRING" id="10090.ENSMUSP00000109547"/>
<dbReference type="iPTMnet" id="Q9JHG1"/>
<dbReference type="PhosphoSitePlus" id="Q9JHG1"/>
<dbReference type="PaxDb" id="10090-ENSMUSP00000109547"/>
<dbReference type="ProteomicsDB" id="287724"/>
<dbReference type="Antibodypedia" id="8411">
    <property type="antibodies" value="122 antibodies from 23 providers"/>
</dbReference>
<dbReference type="DNASU" id="56176"/>
<dbReference type="Ensembl" id="ENSMUST00000113905.8">
    <property type="protein sequence ID" value="ENSMUSP00000109538.2"/>
    <property type="gene ID" value="ENSMUSG00000022940.18"/>
</dbReference>
<dbReference type="Ensembl" id="ENSMUST00000113906.9">
    <property type="protein sequence ID" value="ENSMUSP00000109539.3"/>
    <property type="gene ID" value="ENSMUSG00000022940.18"/>
</dbReference>
<dbReference type="Ensembl" id="ENSMUST00000232294.2">
    <property type="protein sequence ID" value="ENSMUSP00000155972.2"/>
    <property type="gene ID" value="ENSMUSG00000022940.18"/>
</dbReference>
<dbReference type="GeneID" id="56176"/>
<dbReference type="KEGG" id="mmu:56176"/>
<dbReference type="UCSC" id="uc008aan.2">
    <property type="organism name" value="mouse"/>
</dbReference>
<dbReference type="AGR" id="MGI:1860433"/>
<dbReference type="CTD" id="51227"/>
<dbReference type="MGI" id="MGI:1860433">
    <property type="gene designation" value="Pigp"/>
</dbReference>
<dbReference type="VEuPathDB" id="HostDB:ENSMUSG00000022940"/>
<dbReference type="eggNOG" id="KOG2257">
    <property type="taxonomic scope" value="Eukaryota"/>
</dbReference>
<dbReference type="GeneTree" id="ENSGT00390000013771"/>
<dbReference type="InParanoid" id="Q9JHG1"/>
<dbReference type="OMA" id="KGICNRN"/>
<dbReference type="OrthoDB" id="690928at2759"/>
<dbReference type="PhylomeDB" id="Q9JHG1"/>
<dbReference type="BRENDA" id="2.4.1.198">
    <property type="organism ID" value="3474"/>
</dbReference>
<dbReference type="Reactome" id="R-MMU-162710">
    <property type="pathway name" value="Synthesis of glycosylphosphatidylinositol (GPI)"/>
</dbReference>
<dbReference type="UniPathway" id="UPA00196"/>
<dbReference type="BioGRID-ORCS" id="56176">
    <property type="hits" value="5 hits in 81 CRISPR screens"/>
</dbReference>
<dbReference type="ChiTaRS" id="Pigp">
    <property type="organism name" value="mouse"/>
</dbReference>
<dbReference type="PRO" id="PR:Q9JHG1"/>
<dbReference type="Proteomes" id="UP000000589">
    <property type="component" value="Chromosome 16"/>
</dbReference>
<dbReference type="RNAct" id="Q9JHG1">
    <property type="molecule type" value="protein"/>
</dbReference>
<dbReference type="Bgee" id="ENSMUSG00000022940">
    <property type="expression patterns" value="Expressed in quadriceps femoris and 81 other cell types or tissues"/>
</dbReference>
<dbReference type="ExpressionAtlas" id="Q9JHG1">
    <property type="expression patterns" value="baseline and differential"/>
</dbReference>
<dbReference type="GO" id="GO:0005783">
    <property type="term" value="C:endoplasmic reticulum"/>
    <property type="evidence" value="ECO:0000314"/>
    <property type="project" value="MGI"/>
</dbReference>
<dbReference type="GO" id="GO:0000506">
    <property type="term" value="C:glycosylphosphatidylinositol-N-acetylglucosaminyltransferase (GPI-GnT) complex"/>
    <property type="evidence" value="ECO:0000250"/>
    <property type="project" value="UniProtKB"/>
</dbReference>
<dbReference type="GO" id="GO:0017176">
    <property type="term" value="F:phosphatidylinositol N-acetylglucosaminyltransferase activity"/>
    <property type="evidence" value="ECO:0007669"/>
    <property type="project" value="InterPro"/>
</dbReference>
<dbReference type="GO" id="GO:0006506">
    <property type="term" value="P:GPI anchor biosynthetic process"/>
    <property type="evidence" value="ECO:0000315"/>
    <property type="project" value="MGI"/>
</dbReference>
<dbReference type="InterPro" id="IPR052263">
    <property type="entry name" value="GPI_Anchor_Biosynth"/>
</dbReference>
<dbReference type="InterPro" id="IPR013717">
    <property type="entry name" value="PIG-P"/>
</dbReference>
<dbReference type="InterPro" id="IPR016542">
    <property type="entry name" value="PIG-P_GPI19"/>
</dbReference>
<dbReference type="PANTHER" id="PTHR46346">
    <property type="entry name" value="PHOSPHATIDYLINOSITOL N-ACETYLGLUCOSAMINYLTRANSFERASE SUBUNIT P"/>
    <property type="match status" value="1"/>
</dbReference>
<dbReference type="PANTHER" id="PTHR46346:SF1">
    <property type="entry name" value="PHOSPHATIDYLINOSITOL N-ACETYLGLUCOSAMINYLTRANSFERASE SUBUNIT P"/>
    <property type="match status" value="1"/>
</dbReference>
<dbReference type="Pfam" id="PF08510">
    <property type="entry name" value="PIG-P"/>
    <property type="match status" value="1"/>
</dbReference>
<dbReference type="PIRSF" id="PIRSF008765">
    <property type="entry name" value="PIG-P_GPI19"/>
    <property type="match status" value="1"/>
</dbReference>
<feature type="chain" id="PRO_0000191784" description="Phosphatidylinositol N-acetylglucosaminyltransferase subunit P">
    <location>
        <begin position="1"/>
        <end position="132"/>
    </location>
</feature>
<feature type="transmembrane region" description="Helical" evidence="2">
    <location>
        <begin position="16"/>
        <end position="36"/>
    </location>
</feature>
<feature type="transmembrane region" description="Helical" evidence="2">
    <location>
        <begin position="56"/>
        <end position="76"/>
    </location>
</feature>